<gene>
    <name evidence="1" type="primary">rnfH</name>
    <name type="ordered locus">SeAg_B2831</name>
</gene>
<sequence>MPDKLVVEVAYALPEKQYLQRVTLEEGATVEEAIRASGLLELRTDIDLAKNKVGIYSRPVKLTDTVQDGDRVEIYRPLIADPKALRRQRAEKSAGR</sequence>
<evidence type="ECO:0000255" key="1">
    <source>
        <dbReference type="HAMAP-Rule" id="MF_00460"/>
    </source>
</evidence>
<name>RNFH_SALA4</name>
<organism>
    <name type="scientific">Salmonella agona (strain SL483)</name>
    <dbReference type="NCBI Taxonomy" id="454166"/>
    <lineage>
        <taxon>Bacteria</taxon>
        <taxon>Pseudomonadati</taxon>
        <taxon>Pseudomonadota</taxon>
        <taxon>Gammaproteobacteria</taxon>
        <taxon>Enterobacterales</taxon>
        <taxon>Enterobacteriaceae</taxon>
        <taxon>Salmonella</taxon>
    </lineage>
</organism>
<proteinExistence type="inferred from homology"/>
<protein>
    <recommendedName>
        <fullName evidence="1">Protein RnfH</fullName>
    </recommendedName>
</protein>
<reference key="1">
    <citation type="journal article" date="2011" name="J. Bacteriol.">
        <title>Comparative genomics of 28 Salmonella enterica isolates: evidence for CRISPR-mediated adaptive sublineage evolution.</title>
        <authorList>
            <person name="Fricke W.F."/>
            <person name="Mammel M.K."/>
            <person name="McDermott P.F."/>
            <person name="Tartera C."/>
            <person name="White D.G."/>
            <person name="Leclerc J.E."/>
            <person name="Ravel J."/>
            <person name="Cebula T.A."/>
        </authorList>
    </citation>
    <scope>NUCLEOTIDE SEQUENCE [LARGE SCALE GENOMIC DNA]</scope>
    <source>
        <strain>SL483</strain>
    </source>
</reference>
<accession>B5F298</accession>
<feature type="chain" id="PRO_1000200191" description="Protein RnfH">
    <location>
        <begin position="1"/>
        <end position="96"/>
    </location>
</feature>
<comment type="similarity">
    <text evidence="1">Belongs to the UPF0125 (RnfH) family.</text>
</comment>
<dbReference type="EMBL" id="CP001138">
    <property type="protein sequence ID" value="ACH48885.1"/>
    <property type="molecule type" value="Genomic_DNA"/>
</dbReference>
<dbReference type="RefSeq" id="WP_001112990.1">
    <property type="nucleotide sequence ID" value="NC_011149.1"/>
</dbReference>
<dbReference type="SMR" id="B5F298"/>
<dbReference type="KEGG" id="sea:SeAg_B2831"/>
<dbReference type="HOGENOM" id="CLU_150721_1_0_6"/>
<dbReference type="Proteomes" id="UP000008819">
    <property type="component" value="Chromosome"/>
</dbReference>
<dbReference type="Gene3D" id="3.10.20.280">
    <property type="entry name" value="RnfH-like"/>
    <property type="match status" value="1"/>
</dbReference>
<dbReference type="HAMAP" id="MF_00460">
    <property type="entry name" value="UPF0125_RnfH"/>
    <property type="match status" value="1"/>
</dbReference>
<dbReference type="InterPro" id="IPR016155">
    <property type="entry name" value="Mopterin_synth/thiamin_S_b"/>
</dbReference>
<dbReference type="InterPro" id="IPR005346">
    <property type="entry name" value="RnfH"/>
</dbReference>
<dbReference type="InterPro" id="IPR037021">
    <property type="entry name" value="RnfH_sf"/>
</dbReference>
<dbReference type="NCBIfam" id="NF002490">
    <property type="entry name" value="PRK01777.1"/>
    <property type="match status" value="1"/>
</dbReference>
<dbReference type="PANTHER" id="PTHR37483">
    <property type="entry name" value="UPF0125 PROTEIN RATB"/>
    <property type="match status" value="1"/>
</dbReference>
<dbReference type="PANTHER" id="PTHR37483:SF1">
    <property type="entry name" value="UPF0125 PROTEIN RATB"/>
    <property type="match status" value="1"/>
</dbReference>
<dbReference type="Pfam" id="PF03658">
    <property type="entry name" value="Ub-RnfH"/>
    <property type="match status" value="1"/>
</dbReference>
<dbReference type="SUPFAM" id="SSF54285">
    <property type="entry name" value="MoaD/ThiS"/>
    <property type="match status" value="1"/>
</dbReference>